<name>CXCR5_MOUSE</name>
<accession>Q04683</accession>
<accession>Q6P3C2</accession>
<feature type="chain" id="PRO_0000069361" description="C-X-C chemokine receptor type 5">
    <location>
        <begin position="1"/>
        <end position="374"/>
    </location>
</feature>
<feature type="topological domain" description="Extracellular" evidence="1">
    <location>
        <begin position="1"/>
        <end position="57"/>
    </location>
</feature>
<feature type="transmembrane region" description="Helical; Name=1" evidence="1">
    <location>
        <begin position="58"/>
        <end position="78"/>
    </location>
</feature>
<feature type="topological domain" description="Cytoplasmic" evidence="1">
    <location>
        <begin position="79"/>
        <end position="90"/>
    </location>
</feature>
<feature type="transmembrane region" description="Helical; Name=2" evidence="1">
    <location>
        <begin position="91"/>
        <end position="111"/>
    </location>
</feature>
<feature type="topological domain" description="Extracellular" evidence="1">
    <location>
        <begin position="112"/>
        <end position="126"/>
    </location>
</feature>
<feature type="transmembrane region" description="Helical; Name=3" evidence="1">
    <location>
        <begin position="127"/>
        <end position="147"/>
    </location>
</feature>
<feature type="topological domain" description="Cytoplasmic" evidence="1">
    <location>
        <begin position="148"/>
        <end position="169"/>
    </location>
</feature>
<feature type="transmembrane region" description="Helical; Name=4" evidence="1">
    <location>
        <begin position="170"/>
        <end position="190"/>
    </location>
</feature>
<feature type="topological domain" description="Extracellular" evidence="1">
    <location>
        <begin position="191"/>
        <end position="221"/>
    </location>
</feature>
<feature type="transmembrane region" description="Helical; Name=5" evidence="1">
    <location>
        <begin position="222"/>
        <end position="242"/>
    </location>
</feature>
<feature type="topological domain" description="Cytoplasmic" evidence="1">
    <location>
        <begin position="243"/>
        <end position="261"/>
    </location>
</feature>
<feature type="transmembrane region" description="Helical; Name=6" evidence="1">
    <location>
        <begin position="262"/>
        <end position="282"/>
    </location>
</feature>
<feature type="topological domain" description="Extracellular" evidence="1">
    <location>
        <begin position="283"/>
        <end position="306"/>
    </location>
</feature>
<feature type="transmembrane region" description="Helical; Name=7" evidence="1">
    <location>
        <begin position="307"/>
        <end position="327"/>
    </location>
</feature>
<feature type="topological domain" description="Cytoplasmic" evidence="1">
    <location>
        <begin position="328"/>
        <end position="374"/>
    </location>
</feature>
<feature type="glycosylation site" description="N-linked (GlcNAc...) asparagine" evidence="1">
    <location>
        <position position="28"/>
    </location>
</feature>
<feature type="glycosylation site" description="N-linked (GlcNAc...) asparagine" evidence="1">
    <location>
        <position position="198"/>
    </location>
</feature>
<feature type="disulfide bond" evidence="2">
    <location>
        <begin position="124"/>
        <end position="204"/>
    </location>
</feature>
<feature type="sequence conflict" description="In Ref. 1; CAA50673." evidence="3" ref="1">
    <original>L</original>
    <variation>V</variation>
    <location>
        <position position="142"/>
    </location>
</feature>
<gene>
    <name type="primary">Cxcr5</name>
    <name type="synonym">Blr1</name>
    <name type="synonym">Gpcr6</name>
</gene>
<proteinExistence type="evidence at protein level"/>
<dbReference type="EMBL" id="X71788">
    <property type="protein sequence ID" value="CAA50673.1"/>
    <property type="molecule type" value="mRNA"/>
</dbReference>
<dbReference type="EMBL" id="AK155954">
    <property type="protein sequence ID" value="BAE33519.1"/>
    <property type="molecule type" value="mRNA"/>
</dbReference>
<dbReference type="EMBL" id="AK156087">
    <property type="protein sequence ID" value="BAE33583.1"/>
    <property type="molecule type" value="mRNA"/>
</dbReference>
<dbReference type="EMBL" id="AK157016">
    <property type="protein sequence ID" value="BAE33932.1"/>
    <property type="molecule type" value="mRNA"/>
</dbReference>
<dbReference type="EMBL" id="CH466522">
    <property type="protein sequence ID" value="EDL25602.1"/>
    <property type="molecule type" value="Genomic_DNA"/>
</dbReference>
<dbReference type="EMBL" id="BC064059">
    <property type="protein sequence ID" value="AAH64059.1"/>
    <property type="molecule type" value="mRNA"/>
</dbReference>
<dbReference type="EMBL" id="L20332">
    <property type="protein sequence ID" value="AAA16852.1"/>
    <property type="molecule type" value="mRNA"/>
</dbReference>
<dbReference type="CCDS" id="CCDS23115.1"/>
<dbReference type="PIR" id="S42628">
    <property type="entry name" value="S42628"/>
</dbReference>
<dbReference type="RefSeq" id="NP_031577.2">
    <property type="nucleotide sequence ID" value="NM_007551.2"/>
</dbReference>
<dbReference type="SMR" id="Q04683"/>
<dbReference type="FunCoup" id="Q04683">
    <property type="interactions" value="465"/>
</dbReference>
<dbReference type="IntAct" id="Q04683">
    <property type="interactions" value="1"/>
</dbReference>
<dbReference type="STRING" id="10090.ENSMUSP00000149508"/>
<dbReference type="GlyCosmos" id="Q04683">
    <property type="glycosylation" value="2 sites, No reported glycans"/>
</dbReference>
<dbReference type="GlyGen" id="Q04683">
    <property type="glycosylation" value="2 sites"/>
</dbReference>
<dbReference type="iPTMnet" id="Q04683"/>
<dbReference type="PhosphoSitePlus" id="Q04683"/>
<dbReference type="SwissPalm" id="Q04683"/>
<dbReference type="jPOST" id="Q04683"/>
<dbReference type="PaxDb" id="10090-ENSMUSP00000137518"/>
<dbReference type="ProteomicsDB" id="277929"/>
<dbReference type="Antibodypedia" id="18705">
    <property type="antibodies" value="773 antibodies from 41 providers"/>
</dbReference>
<dbReference type="DNASU" id="12145"/>
<dbReference type="Ensembl" id="ENSMUST00000062215.8">
    <property type="protein sequence ID" value="ENSMUSP00000050444.8"/>
    <property type="gene ID" value="ENSMUSG00000047880.16"/>
</dbReference>
<dbReference type="Ensembl" id="ENSMUST00000179828.8">
    <property type="protein sequence ID" value="ENSMUSP00000137518.2"/>
    <property type="gene ID" value="ENSMUSG00000047880.16"/>
</dbReference>
<dbReference type="Ensembl" id="ENSMUST00000215293.2">
    <property type="protein sequence ID" value="ENSMUSP00000149508.2"/>
    <property type="gene ID" value="ENSMUSG00000047880.16"/>
</dbReference>
<dbReference type="GeneID" id="12145"/>
<dbReference type="KEGG" id="mmu:12145"/>
<dbReference type="UCSC" id="uc009pdx.1">
    <property type="organism name" value="mouse"/>
</dbReference>
<dbReference type="AGR" id="MGI:103567"/>
<dbReference type="CTD" id="643"/>
<dbReference type="MGI" id="MGI:103567">
    <property type="gene designation" value="Cxcr5"/>
</dbReference>
<dbReference type="VEuPathDB" id="HostDB:ENSMUSG00000047880"/>
<dbReference type="eggNOG" id="KOG3656">
    <property type="taxonomic scope" value="Eukaryota"/>
</dbReference>
<dbReference type="GeneTree" id="ENSGT01050000244848"/>
<dbReference type="HOGENOM" id="CLU_009579_8_3_1"/>
<dbReference type="InParanoid" id="Q04683"/>
<dbReference type="OMA" id="FTKNCLL"/>
<dbReference type="OrthoDB" id="9818824at2759"/>
<dbReference type="PhylomeDB" id="Q04683"/>
<dbReference type="TreeFam" id="TF330966"/>
<dbReference type="Reactome" id="R-MMU-380108">
    <property type="pathway name" value="Chemokine receptors bind chemokines"/>
</dbReference>
<dbReference type="Reactome" id="R-MMU-418594">
    <property type="pathway name" value="G alpha (i) signalling events"/>
</dbReference>
<dbReference type="BioGRID-ORCS" id="12145">
    <property type="hits" value="1 hit in 78 CRISPR screens"/>
</dbReference>
<dbReference type="ChiTaRS" id="Cxcr5">
    <property type="organism name" value="mouse"/>
</dbReference>
<dbReference type="PRO" id="PR:Q04683"/>
<dbReference type="Proteomes" id="UP000000589">
    <property type="component" value="Chromosome 9"/>
</dbReference>
<dbReference type="RNAct" id="Q04683">
    <property type="molecule type" value="protein"/>
</dbReference>
<dbReference type="Bgee" id="ENSMUSG00000047880">
    <property type="expression patterns" value="Expressed in peripheral lymph node and 50 other cell types or tissues"/>
</dbReference>
<dbReference type="ExpressionAtlas" id="Q04683">
    <property type="expression patterns" value="baseline and differential"/>
</dbReference>
<dbReference type="GO" id="GO:0009897">
    <property type="term" value="C:external side of plasma membrane"/>
    <property type="evidence" value="ECO:0000314"/>
    <property type="project" value="MGI"/>
</dbReference>
<dbReference type="GO" id="GO:0016494">
    <property type="term" value="F:C-X-C chemokine receptor activity"/>
    <property type="evidence" value="ECO:0007669"/>
    <property type="project" value="InterPro"/>
</dbReference>
<dbReference type="GO" id="GO:0042113">
    <property type="term" value="P:B cell activation"/>
    <property type="evidence" value="ECO:0007669"/>
    <property type="project" value="UniProtKB-KW"/>
</dbReference>
<dbReference type="GO" id="GO:0006955">
    <property type="term" value="P:immune response"/>
    <property type="evidence" value="ECO:0007669"/>
    <property type="project" value="InterPro"/>
</dbReference>
<dbReference type="GO" id="GO:0030595">
    <property type="term" value="P:leukocyte chemotaxis"/>
    <property type="evidence" value="ECO:0000314"/>
    <property type="project" value="MGI"/>
</dbReference>
<dbReference type="GO" id="GO:0048535">
    <property type="term" value="P:lymph node development"/>
    <property type="evidence" value="ECO:0000315"/>
    <property type="project" value="MGI"/>
</dbReference>
<dbReference type="GO" id="GO:0032467">
    <property type="term" value="P:positive regulation of cytokinesis"/>
    <property type="evidence" value="ECO:0007669"/>
    <property type="project" value="Ensembl"/>
</dbReference>
<dbReference type="CDD" id="cd15181">
    <property type="entry name" value="7tmA_CXCR5"/>
    <property type="match status" value="1"/>
</dbReference>
<dbReference type="FunFam" id="1.20.1070.10:FF:000143">
    <property type="entry name" value="C-X-C chemokine receptor type 5"/>
    <property type="match status" value="1"/>
</dbReference>
<dbReference type="Gene3D" id="1.20.1070.10">
    <property type="entry name" value="Rhodopsin 7-helix transmembrane proteins"/>
    <property type="match status" value="1"/>
</dbReference>
<dbReference type="InterPro" id="IPR050119">
    <property type="entry name" value="CCR1-9-like"/>
</dbReference>
<dbReference type="InterPro" id="IPR001053">
    <property type="entry name" value="Chemokine_CXCR5"/>
</dbReference>
<dbReference type="InterPro" id="IPR000276">
    <property type="entry name" value="GPCR_Rhodpsn"/>
</dbReference>
<dbReference type="InterPro" id="IPR017452">
    <property type="entry name" value="GPCR_Rhodpsn_7TM"/>
</dbReference>
<dbReference type="PANTHER" id="PTHR10489:SF618">
    <property type="entry name" value="C-X-C CHEMOKINE RECEPTOR TYPE 5"/>
    <property type="match status" value="1"/>
</dbReference>
<dbReference type="PANTHER" id="PTHR10489">
    <property type="entry name" value="CELL ADHESION MOLECULE"/>
    <property type="match status" value="1"/>
</dbReference>
<dbReference type="Pfam" id="PF00001">
    <property type="entry name" value="7tm_1"/>
    <property type="match status" value="1"/>
</dbReference>
<dbReference type="PRINTS" id="PR00564">
    <property type="entry name" value="CXCCHMKINER5"/>
</dbReference>
<dbReference type="PRINTS" id="PR00237">
    <property type="entry name" value="GPCRRHODOPSN"/>
</dbReference>
<dbReference type="SUPFAM" id="SSF81321">
    <property type="entry name" value="Family A G protein-coupled receptor-like"/>
    <property type="match status" value="1"/>
</dbReference>
<dbReference type="PROSITE" id="PS00237">
    <property type="entry name" value="G_PROTEIN_RECEP_F1_1"/>
    <property type="match status" value="1"/>
</dbReference>
<dbReference type="PROSITE" id="PS50262">
    <property type="entry name" value="G_PROTEIN_RECEP_F1_2"/>
    <property type="match status" value="1"/>
</dbReference>
<reference key="1">
    <citation type="journal article" date="1993" name="Eur. J. Immunol.">
        <title>The G protein-coupled receptor BLR1 is involved in murine B cell differentiation and is also expressed in neuronal tissues.</title>
        <authorList>
            <person name="Kaiser E."/>
            <person name="Foerster R."/>
            <person name="Wolf I."/>
            <person name="Epensperger C."/>
            <person name="Kuehl W.M."/>
            <person name="Lipp M."/>
        </authorList>
    </citation>
    <scope>NUCLEOTIDE SEQUENCE [MRNA]</scope>
    <source>
        <strain>BALB/cJ</strain>
        <tissue>Liver</tissue>
    </source>
</reference>
<reference key="2">
    <citation type="journal article" date="2005" name="Science">
        <title>The transcriptional landscape of the mammalian genome.</title>
        <authorList>
            <person name="Carninci P."/>
            <person name="Kasukawa T."/>
            <person name="Katayama S."/>
            <person name="Gough J."/>
            <person name="Frith M.C."/>
            <person name="Maeda N."/>
            <person name="Oyama R."/>
            <person name="Ravasi T."/>
            <person name="Lenhard B."/>
            <person name="Wells C."/>
            <person name="Kodzius R."/>
            <person name="Shimokawa K."/>
            <person name="Bajic V.B."/>
            <person name="Brenner S.E."/>
            <person name="Batalov S."/>
            <person name="Forrest A.R."/>
            <person name="Zavolan M."/>
            <person name="Davis M.J."/>
            <person name="Wilming L.G."/>
            <person name="Aidinis V."/>
            <person name="Allen J.E."/>
            <person name="Ambesi-Impiombato A."/>
            <person name="Apweiler R."/>
            <person name="Aturaliya R.N."/>
            <person name="Bailey T.L."/>
            <person name="Bansal M."/>
            <person name="Baxter L."/>
            <person name="Beisel K.W."/>
            <person name="Bersano T."/>
            <person name="Bono H."/>
            <person name="Chalk A.M."/>
            <person name="Chiu K.P."/>
            <person name="Choudhary V."/>
            <person name="Christoffels A."/>
            <person name="Clutterbuck D.R."/>
            <person name="Crowe M.L."/>
            <person name="Dalla E."/>
            <person name="Dalrymple B.P."/>
            <person name="de Bono B."/>
            <person name="Della Gatta G."/>
            <person name="di Bernardo D."/>
            <person name="Down T."/>
            <person name="Engstrom P."/>
            <person name="Fagiolini M."/>
            <person name="Faulkner G."/>
            <person name="Fletcher C.F."/>
            <person name="Fukushima T."/>
            <person name="Furuno M."/>
            <person name="Futaki S."/>
            <person name="Gariboldi M."/>
            <person name="Georgii-Hemming P."/>
            <person name="Gingeras T.R."/>
            <person name="Gojobori T."/>
            <person name="Green R.E."/>
            <person name="Gustincich S."/>
            <person name="Harbers M."/>
            <person name="Hayashi Y."/>
            <person name="Hensch T.K."/>
            <person name="Hirokawa N."/>
            <person name="Hill D."/>
            <person name="Huminiecki L."/>
            <person name="Iacono M."/>
            <person name="Ikeo K."/>
            <person name="Iwama A."/>
            <person name="Ishikawa T."/>
            <person name="Jakt M."/>
            <person name="Kanapin A."/>
            <person name="Katoh M."/>
            <person name="Kawasawa Y."/>
            <person name="Kelso J."/>
            <person name="Kitamura H."/>
            <person name="Kitano H."/>
            <person name="Kollias G."/>
            <person name="Krishnan S.P."/>
            <person name="Kruger A."/>
            <person name="Kummerfeld S.K."/>
            <person name="Kurochkin I.V."/>
            <person name="Lareau L.F."/>
            <person name="Lazarevic D."/>
            <person name="Lipovich L."/>
            <person name="Liu J."/>
            <person name="Liuni S."/>
            <person name="McWilliam S."/>
            <person name="Madan Babu M."/>
            <person name="Madera M."/>
            <person name="Marchionni L."/>
            <person name="Matsuda H."/>
            <person name="Matsuzawa S."/>
            <person name="Miki H."/>
            <person name="Mignone F."/>
            <person name="Miyake S."/>
            <person name="Morris K."/>
            <person name="Mottagui-Tabar S."/>
            <person name="Mulder N."/>
            <person name="Nakano N."/>
            <person name="Nakauchi H."/>
            <person name="Ng P."/>
            <person name="Nilsson R."/>
            <person name="Nishiguchi S."/>
            <person name="Nishikawa S."/>
            <person name="Nori F."/>
            <person name="Ohara O."/>
            <person name="Okazaki Y."/>
            <person name="Orlando V."/>
            <person name="Pang K.C."/>
            <person name="Pavan W.J."/>
            <person name="Pavesi G."/>
            <person name="Pesole G."/>
            <person name="Petrovsky N."/>
            <person name="Piazza S."/>
            <person name="Reed J."/>
            <person name="Reid J.F."/>
            <person name="Ring B.Z."/>
            <person name="Ringwald M."/>
            <person name="Rost B."/>
            <person name="Ruan Y."/>
            <person name="Salzberg S.L."/>
            <person name="Sandelin A."/>
            <person name="Schneider C."/>
            <person name="Schoenbach C."/>
            <person name="Sekiguchi K."/>
            <person name="Semple C.A."/>
            <person name="Seno S."/>
            <person name="Sessa L."/>
            <person name="Sheng Y."/>
            <person name="Shibata Y."/>
            <person name="Shimada H."/>
            <person name="Shimada K."/>
            <person name="Silva D."/>
            <person name="Sinclair B."/>
            <person name="Sperling S."/>
            <person name="Stupka E."/>
            <person name="Sugiura K."/>
            <person name="Sultana R."/>
            <person name="Takenaka Y."/>
            <person name="Taki K."/>
            <person name="Tammoja K."/>
            <person name="Tan S.L."/>
            <person name="Tang S."/>
            <person name="Taylor M.S."/>
            <person name="Tegner J."/>
            <person name="Teichmann S.A."/>
            <person name="Ueda H.R."/>
            <person name="van Nimwegen E."/>
            <person name="Verardo R."/>
            <person name="Wei C.L."/>
            <person name="Yagi K."/>
            <person name="Yamanishi H."/>
            <person name="Zabarovsky E."/>
            <person name="Zhu S."/>
            <person name="Zimmer A."/>
            <person name="Hide W."/>
            <person name="Bult C."/>
            <person name="Grimmond S.M."/>
            <person name="Teasdale R.D."/>
            <person name="Liu E.T."/>
            <person name="Brusic V."/>
            <person name="Quackenbush J."/>
            <person name="Wahlestedt C."/>
            <person name="Mattick J.S."/>
            <person name="Hume D.A."/>
            <person name="Kai C."/>
            <person name="Sasaki D."/>
            <person name="Tomaru Y."/>
            <person name="Fukuda S."/>
            <person name="Kanamori-Katayama M."/>
            <person name="Suzuki M."/>
            <person name="Aoki J."/>
            <person name="Arakawa T."/>
            <person name="Iida J."/>
            <person name="Imamura K."/>
            <person name="Itoh M."/>
            <person name="Kato T."/>
            <person name="Kawaji H."/>
            <person name="Kawagashira N."/>
            <person name="Kawashima T."/>
            <person name="Kojima M."/>
            <person name="Kondo S."/>
            <person name="Konno H."/>
            <person name="Nakano K."/>
            <person name="Ninomiya N."/>
            <person name="Nishio T."/>
            <person name="Okada M."/>
            <person name="Plessy C."/>
            <person name="Shibata K."/>
            <person name="Shiraki T."/>
            <person name="Suzuki S."/>
            <person name="Tagami M."/>
            <person name="Waki K."/>
            <person name="Watahiki A."/>
            <person name="Okamura-Oho Y."/>
            <person name="Suzuki H."/>
            <person name="Kawai J."/>
            <person name="Hayashizaki Y."/>
        </authorList>
    </citation>
    <scope>NUCLEOTIDE SEQUENCE [LARGE SCALE MRNA]</scope>
    <source>
        <strain>NOD</strain>
        <tissue>Spleen</tissue>
    </source>
</reference>
<reference key="3">
    <citation type="submission" date="2005-07" db="EMBL/GenBank/DDBJ databases">
        <authorList>
            <person name="Mural R.J."/>
            <person name="Adams M.D."/>
            <person name="Myers E.W."/>
            <person name="Smith H.O."/>
            <person name="Venter J.C."/>
        </authorList>
    </citation>
    <scope>NUCLEOTIDE SEQUENCE [LARGE SCALE GENOMIC DNA]</scope>
</reference>
<reference key="4">
    <citation type="journal article" date="2004" name="Genome Res.">
        <title>The status, quality, and expansion of the NIH full-length cDNA project: the Mammalian Gene Collection (MGC).</title>
        <authorList>
            <consortium name="The MGC Project Team"/>
        </authorList>
    </citation>
    <scope>NUCLEOTIDE SEQUENCE [LARGE SCALE MRNA]</scope>
    <source>
        <strain>C57BL/6J</strain>
        <tissue>Mammary gland</tissue>
    </source>
</reference>
<reference key="5">
    <citation type="journal article" date="1993" name="Genomics">
        <title>Identification, chromosomal location, and genome organization of mammalian G-protein-coupled receptors.</title>
        <authorList>
            <person name="Wilkie T.M."/>
            <person name="Chen Y."/>
            <person name="Gilbert D.J."/>
            <person name="Moore K.J."/>
            <person name="Yu L."/>
            <person name="Simon M.I."/>
            <person name="Copeland N.G."/>
            <person name="Jenkins N.A."/>
        </authorList>
    </citation>
    <scope>NUCLEOTIDE SEQUENCE [MRNA] OF 151-269</scope>
    <source>
        <tissue>Testis</tissue>
    </source>
</reference>
<reference key="6">
    <citation type="journal article" date="1996" name="Cell">
        <title>A putative chemokine receptor, BLR1, directs B cell migration to defined lymphoid organs and specific anatomic compartments of the spleen.</title>
        <authorList>
            <person name="Foerster R."/>
            <person name="Mattis A.E."/>
            <person name="Kremmer E."/>
            <person name="Wolf E."/>
            <person name="Brem G."/>
            <person name="Lipp M."/>
        </authorList>
    </citation>
    <scope>CHARACTERIZATION</scope>
</reference>
<reference key="7">
    <citation type="journal article" date="1998" name="Nature">
        <title>A B-cell-homing chemokine made in lymphoid follicles activates Burkitt's lymphoma receptor-1.</title>
        <authorList>
            <person name="Gunn M.D."/>
            <person name="Ngo V.N."/>
            <person name="Ansel K.M."/>
            <person name="Ekland E.H."/>
            <person name="Cyster J.G."/>
            <person name="Williams L.T."/>
        </authorList>
    </citation>
    <scope>LIGAND-BINDING</scope>
</reference>
<reference key="8">
    <citation type="journal article" date="2010" name="Cell">
        <title>A tissue-specific atlas of mouse protein phosphorylation and expression.</title>
        <authorList>
            <person name="Huttlin E.L."/>
            <person name="Jedrychowski M.P."/>
            <person name="Elias J.E."/>
            <person name="Goswami T."/>
            <person name="Rad R."/>
            <person name="Beausoleil S.A."/>
            <person name="Villen J."/>
            <person name="Haas W."/>
            <person name="Sowa M.E."/>
            <person name="Gygi S.P."/>
        </authorList>
    </citation>
    <scope>IDENTIFICATION BY MASS SPECTROMETRY [LARGE SCALE ANALYSIS]</scope>
    <source>
        <tissue>Spleen</tissue>
    </source>
</reference>
<sequence>MNYPLTLDMGSITYNMDDLYKELAFYSNSTEIPLQDSNFCSTVEGPLLTSFKAVFMPVAYSLIFLLGMMGNILVLVILERHRHTRSSTETFLFHLAVADLLLVFILPFAVAEGSVGWVLGTFLCKTVIALHKINFYCSSLLLACIAVDRYLAIVHAVHAYRRRRLLSIHITCTAIWLAGFLFALPELLFAKVGQPHNNDSLPQCTFSQENEAETRAWFTSRFLYHIGGFLLPMLVMGWCYVGVVHRLLQAQRRPQRQKAVRVAILVTSIFFLCWSPYHIVIFLDTLERLKAVNSSCELSGYLSVAITLCEFLGLAHCCLNPMLYTFAGVKFRSDLSRLLTKLGCAGPASLCQLFPNWRKSSLSESENATSLTTF</sequence>
<protein>
    <recommendedName>
        <fullName>C-X-C chemokine receptor type 5</fullName>
        <shortName>CXC-R5</shortName>
        <shortName>CXCR-5</shortName>
    </recommendedName>
    <alternativeName>
        <fullName>Burkitt lymphoma receptor 1 homolog</fullName>
    </alternativeName>
    <cdAntigenName>CD185</cdAntigenName>
</protein>
<evidence type="ECO:0000255" key="1"/>
<evidence type="ECO:0000255" key="2">
    <source>
        <dbReference type="PROSITE-ProRule" id="PRU00521"/>
    </source>
</evidence>
<evidence type="ECO:0000305" key="3"/>
<keyword id="KW-0075">B-cell activation</keyword>
<keyword id="KW-1003">Cell membrane</keyword>
<keyword id="KW-1015">Disulfide bond</keyword>
<keyword id="KW-0297">G-protein coupled receptor</keyword>
<keyword id="KW-0325">Glycoprotein</keyword>
<keyword id="KW-0472">Membrane</keyword>
<keyword id="KW-0675">Receptor</keyword>
<keyword id="KW-1185">Reference proteome</keyword>
<keyword id="KW-0807">Transducer</keyword>
<keyword id="KW-0812">Transmembrane</keyword>
<keyword id="KW-1133">Transmembrane helix</keyword>
<comment type="function">
    <text>Cytokine receptor that binds to B-lymphocyte chemoattractant (BLC). Involved in B-cell migration into B-cell follicles of spleen and Peyer patches but not into those of mesenteric or peripheral lymph nodes.</text>
</comment>
<comment type="subcellular location">
    <subcellularLocation>
        <location>Cell membrane</location>
        <topology>Multi-pass membrane protein</topology>
    </subcellularLocation>
</comment>
<comment type="tissue specificity">
    <text>Mainly in spleen, in resting B-cells.</text>
</comment>
<comment type="similarity">
    <text evidence="2">Belongs to the G-protein coupled receptor 1 family.</text>
</comment>
<organism>
    <name type="scientific">Mus musculus</name>
    <name type="common">Mouse</name>
    <dbReference type="NCBI Taxonomy" id="10090"/>
    <lineage>
        <taxon>Eukaryota</taxon>
        <taxon>Metazoa</taxon>
        <taxon>Chordata</taxon>
        <taxon>Craniata</taxon>
        <taxon>Vertebrata</taxon>
        <taxon>Euteleostomi</taxon>
        <taxon>Mammalia</taxon>
        <taxon>Eutheria</taxon>
        <taxon>Euarchontoglires</taxon>
        <taxon>Glires</taxon>
        <taxon>Rodentia</taxon>
        <taxon>Myomorpha</taxon>
        <taxon>Muroidea</taxon>
        <taxon>Muridae</taxon>
        <taxon>Murinae</taxon>
        <taxon>Mus</taxon>
        <taxon>Mus</taxon>
    </lineage>
</organism>